<keyword id="KW-0325">Glycoprotein</keyword>
<keyword id="KW-0472">Membrane</keyword>
<keyword id="KW-1185">Reference proteome</keyword>
<keyword id="KW-0732">Signal</keyword>
<keyword id="KW-0812">Transmembrane</keyword>
<keyword id="KW-1133">Transmembrane helix</keyword>
<accession>Q75IW1</accession>
<accession>Q10JL0</accession>
<gene>
    <name type="primary">BC1L2</name>
    <name type="ordered locus">Os03g0416300</name>
    <name type="ordered locus">LOC_Os03g30260</name>
    <name evidence="3" type="ORF">OsJ_11271</name>
    <name type="ORF">OSJNBb0059G13.19</name>
</gene>
<evidence type="ECO:0000255" key="1"/>
<evidence type="ECO:0000305" key="2"/>
<evidence type="ECO:0000312" key="3">
    <source>
        <dbReference type="EMBL" id="EEE59257.1"/>
    </source>
</evidence>
<feature type="signal peptide" evidence="1">
    <location>
        <begin position="1"/>
        <end position="29"/>
    </location>
</feature>
<feature type="chain" id="PRO_0000247631" description="COBRA-like protein 2">
    <location>
        <begin position="30"/>
        <end position="458"/>
    </location>
</feature>
<feature type="transmembrane region" description="Helical" evidence="1">
    <location>
        <begin position="430"/>
        <end position="450"/>
    </location>
</feature>
<feature type="glycosylation site" description="N-linked (GlcNAc...) asparagine" evidence="1">
    <location>
        <position position="38"/>
    </location>
</feature>
<feature type="glycosylation site" description="N-linked (GlcNAc...) asparagine" evidence="1">
    <location>
        <position position="163"/>
    </location>
</feature>
<feature type="glycosylation site" description="N-linked (GlcNAc...) asparagine" evidence="1">
    <location>
        <position position="171"/>
    </location>
</feature>
<feature type="glycosylation site" description="N-linked (GlcNAc...) asparagine" evidence="1">
    <location>
        <position position="211"/>
    </location>
</feature>
<feature type="glycosylation site" description="N-linked (GlcNAc...) asparagine" evidence="1">
    <location>
        <position position="236"/>
    </location>
</feature>
<feature type="glycosylation site" description="N-linked (GlcNAc...) asparagine" evidence="1">
    <location>
        <position position="318"/>
    </location>
</feature>
<feature type="glycosylation site" description="N-linked (GlcNAc...) asparagine" evidence="1">
    <location>
        <position position="333"/>
    </location>
</feature>
<feature type="glycosylation site" description="N-linked (GlcNAc...) asparagine" evidence="1">
    <location>
        <position position="352"/>
    </location>
</feature>
<name>COBL2_ORYSJ</name>
<sequence>MARFLLGAAAIALLAGVSSLLLMVPFAEAYDPLDPNGNITIKWDITQWTPDGYVAVVTIYNFQKYRHIQAPGWSLGWAWAKKEIIWSMAGGQATEQGDCSAFKANIPHCCKRDPRVVDLVPGAPYNMQFGNCCKGGVLTSWVQDPLNAVASFQITVGHSGTSNKTVKAPKNFTLKAPGPGYSCGLAQEVKPPTRFISLDGRRTTQAHVTWNVTCTYSQFVAQRAPTCCVSLSSFYNETIVNCPKCACGCQNKKPGSCVEGNSPYLASVVNGPGKGSLTPLVQCTPHMCPIRVHWHVKLNYRDYWRVKVTITNWNYRMNYSQWNLVVQHPNFENVSTVFSFNYKSLNPYGVINDTAMMWGVKYYNDLLMVAGPDGNVQSELLFRKDRSTFTFDKGWAFPRRIYFNGESCVMPSPDLYPWLPPSSTPRFRTVFLLMSFLVCGTLAFLHNHLVLDKNCGKC</sequence>
<comment type="subcellular location">
    <subcellularLocation>
        <location evidence="2">Membrane</location>
        <topology evidence="2">Single-pass membrane protein</topology>
    </subcellularLocation>
</comment>
<comment type="similarity">
    <text evidence="2">Belongs to the COBRA family.</text>
</comment>
<organism>
    <name type="scientific">Oryza sativa subsp. japonica</name>
    <name type="common">Rice</name>
    <dbReference type="NCBI Taxonomy" id="39947"/>
    <lineage>
        <taxon>Eukaryota</taxon>
        <taxon>Viridiplantae</taxon>
        <taxon>Streptophyta</taxon>
        <taxon>Embryophyta</taxon>
        <taxon>Tracheophyta</taxon>
        <taxon>Spermatophyta</taxon>
        <taxon>Magnoliopsida</taxon>
        <taxon>Liliopsida</taxon>
        <taxon>Poales</taxon>
        <taxon>Poaceae</taxon>
        <taxon>BOP clade</taxon>
        <taxon>Oryzoideae</taxon>
        <taxon>Oryzeae</taxon>
        <taxon>Oryzinae</taxon>
        <taxon>Oryza</taxon>
        <taxon>Oryza sativa</taxon>
    </lineage>
</organism>
<proteinExistence type="evidence at transcript level"/>
<reference key="1">
    <citation type="journal article" date="2005" name="Genome Res.">
        <title>Sequence, annotation, and analysis of synteny between rice chromosome 3 and diverged grass species.</title>
        <authorList>
            <consortium name="The rice chromosome 3 sequencing consortium"/>
            <person name="Buell C.R."/>
            <person name="Yuan Q."/>
            <person name="Ouyang S."/>
            <person name="Liu J."/>
            <person name="Zhu W."/>
            <person name="Wang A."/>
            <person name="Maiti R."/>
            <person name="Haas B."/>
            <person name="Wortman J."/>
            <person name="Pertea M."/>
            <person name="Jones K.M."/>
            <person name="Kim M."/>
            <person name="Overton L."/>
            <person name="Tsitrin T."/>
            <person name="Fadrosh D."/>
            <person name="Bera J."/>
            <person name="Weaver B."/>
            <person name="Jin S."/>
            <person name="Johri S."/>
            <person name="Reardon M."/>
            <person name="Webb K."/>
            <person name="Hill J."/>
            <person name="Moffat K."/>
            <person name="Tallon L."/>
            <person name="Van Aken S."/>
            <person name="Lewis M."/>
            <person name="Utterback T."/>
            <person name="Feldblyum T."/>
            <person name="Zismann V."/>
            <person name="Iobst S."/>
            <person name="Hsiao J."/>
            <person name="de Vazeille A.R."/>
            <person name="Salzberg S.L."/>
            <person name="White O."/>
            <person name="Fraser C.M."/>
            <person name="Yu Y."/>
            <person name="Kim H."/>
            <person name="Rambo T."/>
            <person name="Currie J."/>
            <person name="Collura K."/>
            <person name="Kernodle-Thompson S."/>
            <person name="Wei F."/>
            <person name="Kudrna K."/>
            <person name="Ammiraju J.S.S."/>
            <person name="Luo M."/>
            <person name="Goicoechea J.L."/>
            <person name="Wing R.A."/>
            <person name="Henry D."/>
            <person name="Oates R."/>
            <person name="Palmer M."/>
            <person name="Pries G."/>
            <person name="Saski C."/>
            <person name="Simmons J."/>
            <person name="Soderlund C."/>
            <person name="Nelson W."/>
            <person name="de la Bastide M."/>
            <person name="Spiegel L."/>
            <person name="Nascimento L."/>
            <person name="Huang E."/>
            <person name="Preston R."/>
            <person name="Zutavern T."/>
            <person name="Palmer L."/>
            <person name="O'Shaughnessy A."/>
            <person name="Dike S."/>
            <person name="McCombie W.R."/>
            <person name="Minx P."/>
            <person name="Cordum H."/>
            <person name="Wilson R."/>
            <person name="Jin W."/>
            <person name="Lee H.R."/>
            <person name="Jiang J."/>
            <person name="Jackson S."/>
        </authorList>
    </citation>
    <scope>NUCLEOTIDE SEQUENCE [LARGE SCALE GENOMIC DNA]</scope>
    <source>
        <strain>cv. Nipponbare</strain>
    </source>
</reference>
<reference key="2">
    <citation type="journal article" date="2005" name="Nature">
        <title>The map-based sequence of the rice genome.</title>
        <authorList>
            <consortium name="International rice genome sequencing project (IRGSP)"/>
        </authorList>
    </citation>
    <scope>NUCLEOTIDE SEQUENCE [LARGE SCALE GENOMIC DNA]</scope>
    <source>
        <strain>cv. Nipponbare</strain>
    </source>
</reference>
<reference key="3">
    <citation type="journal article" date="2008" name="Nucleic Acids Res.">
        <title>The rice annotation project database (RAP-DB): 2008 update.</title>
        <authorList>
            <consortium name="The rice annotation project (RAP)"/>
        </authorList>
    </citation>
    <scope>GENOME REANNOTATION</scope>
    <source>
        <strain>cv. Nipponbare</strain>
    </source>
</reference>
<reference key="4">
    <citation type="journal article" date="2013" name="Rice">
        <title>Improvement of the Oryza sativa Nipponbare reference genome using next generation sequence and optical map data.</title>
        <authorList>
            <person name="Kawahara Y."/>
            <person name="de la Bastide M."/>
            <person name="Hamilton J.P."/>
            <person name="Kanamori H."/>
            <person name="McCombie W.R."/>
            <person name="Ouyang S."/>
            <person name="Schwartz D.C."/>
            <person name="Tanaka T."/>
            <person name="Wu J."/>
            <person name="Zhou S."/>
            <person name="Childs K.L."/>
            <person name="Davidson R.M."/>
            <person name="Lin H."/>
            <person name="Quesada-Ocampo L."/>
            <person name="Vaillancourt B."/>
            <person name="Sakai H."/>
            <person name="Lee S.S."/>
            <person name="Kim J."/>
            <person name="Numa H."/>
            <person name="Itoh T."/>
            <person name="Buell C.R."/>
            <person name="Matsumoto T."/>
        </authorList>
    </citation>
    <scope>GENOME REANNOTATION</scope>
    <source>
        <strain>cv. Nipponbare</strain>
    </source>
</reference>
<reference key="5">
    <citation type="journal article" date="2005" name="PLoS Biol.">
        <title>The genomes of Oryza sativa: a history of duplications.</title>
        <authorList>
            <person name="Yu J."/>
            <person name="Wang J."/>
            <person name="Lin W."/>
            <person name="Li S."/>
            <person name="Li H."/>
            <person name="Zhou J."/>
            <person name="Ni P."/>
            <person name="Dong W."/>
            <person name="Hu S."/>
            <person name="Zeng C."/>
            <person name="Zhang J."/>
            <person name="Zhang Y."/>
            <person name="Li R."/>
            <person name="Xu Z."/>
            <person name="Li S."/>
            <person name="Li X."/>
            <person name="Zheng H."/>
            <person name="Cong L."/>
            <person name="Lin L."/>
            <person name="Yin J."/>
            <person name="Geng J."/>
            <person name="Li G."/>
            <person name="Shi J."/>
            <person name="Liu J."/>
            <person name="Lv H."/>
            <person name="Li J."/>
            <person name="Wang J."/>
            <person name="Deng Y."/>
            <person name="Ran L."/>
            <person name="Shi X."/>
            <person name="Wang X."/>
            <person name="Wu Q."/>
            <person name="Li C."/>
            <person name="Ren X."/>
            <person name="Wang J."/>
            <person name="Wang X."/>
            <person name="Li D."/>
            <person name="Liu D."/>
            <person name="Zhang X."/>
            <person name="Ji Z."/>
            <person name="Zhao W."/>
            <person name="Sun Y."/>
            <person name="Zhang Z."/>
            <person name="Bao J."/>
            <person name="Han Y."/>
            <person name="Dong L."/>
            <person name="Ji J."/>
            <person name="Chen P."/>
            <person name="Wu S."/>
            <person name="Liu J."/>
            <person name="Xiao Y."/>
            <person name="Bu D."/>
            <person name="Tan J."/>
            <person name="Yang L."/>
            <person name="Ye C."/>
            <person name="Zhang J."/>
            <person name="Xu J."/>
            <person name="Zhou Y."/>
            <person name="Yu Y."/>
            <person name="Zhang B."/>
            <person name="Zhuang S."/>
            <person name="Wei H."/>
            <person name="Liu B."/>
            <person name="Lei M."/>
            <person name="Yu H."/>
            <person name="Li Y."/>
            <person name="Xu H."/>
            <person name="Wei S."/>
            <person name="He X."/>
            <person name="Fang L."/>
            <person name="Zhang Z."/>
            <person name="Zhang Y."/>
            <person name="Huang X."/>
            <person name="Su Z."/>
            <person name="Tong W."/>
            <person name="Li J."/>
            <person name="Tong Z."/>
            <person name="Li S."/>
            <person name="Ye J."/>
            <person name="Wang L."/>
            <person name="Fang L."/>
            <person name="Lei T."/>
            <person name="Chen C.-S."/>
            <person name="Chen H.-C."/>
            <person name="Xu Z."/>
            <person name="Li H."/>
            <person name="Huang H."/>
            <person name="Zhang F."/>
            <person name="Xu H."/>
            <person name="Li N."/>
            <person name="Zhao C."/>
            <person name="Li S."/>
            <person name="Dong L."/>
            <person name="Huang Y."/>
            <person name="Li L."/>
            <person name="Xi Y."/>
            <person name="Qi Q."/>
            <person name="Li W."/>
            <person name="Zhang B."/>
            <person name="Hu W."/>
            <person name="Zhang Y."/>
            <person name="Tian X."/>
            <person name="Jiao Y."/>
            <person name="Liang X."/>
            <person name="Jin J."/>
            <person name="Gao L."/>
            <person name="Zheng W."/>
            <person name="Hao B."/>
            <person name="Liu S.-M."/>
            <person name="Wang W."/>
            <person name="Yuan L."/>
            <person name="Cao M."/>
            <person name="McDermott J."/>
            <person name="Samudrala R."/>
            <person name="Wang J."/>
            <person name="Wong G.K.-S."/>
            <person name="Yang H."/>
        </authorList>
    </citation>
    <scope>NUCLEOTIDE SEQUENCE [LARGE SCALE GENOMIC DNA]</scope>
    <source>
        <strain>cv. Nipponbare</strain>
    </source>
</reference>
<reference key="6">
    <citation type="journal article" date="2003" name="Science">
        <title>Collection, mapping, and annotation of over 28,000 cDNA clones from japonica rice.</title>
        <authorList>
            <consortium name="The rice full-length cDNA consortium"/>
        </authorList>
    </citation>
    <scope>NUCLEOTIDE SEQUENCE [LARGE SCALE MRNA]</scope>
    <source>
        <strain>cv. Nipponbare</strain>
    </source>
</reference>
<reference key="7">
    <citation type="journal article" date="2003" name="Plant Cell">
        <title>BRITTLE CULM1, which encodes a COBRA-like protein, affects the mechanical properties of rice plants.</title>
        <authorList>
            <person name="Li Y."/>
            <person name="Qian Q."/>
            <person name="Zhou Y."/>
            <person name="Yan M."/>
            <person name="Sun L."/>
            <person name="Zhang M."/>
            <person name="Fu Z."/>
            <person name="Wang Y."/>
            <person name="Han B."/>
            <person name="Pang X."/>
            <person name="Chen M."/>
            <person name="Li J."/>
        </authorList>
    </citation>
    <scope>IDENTIFICATION</scope>
    <scope>NOMENCLATURE</scope>
</reference>
<dbReference type="EMBL" id="AC120538">
    <property type="protein sequence ID" value="AAS07075.1"/>
    <property type="molecule type" value="Genomic_DNA"/>
</dbReference>
<dbReference type="EMBL" id="DP000009">
    <property type="protein sequence ID" value="ABF96618.1"/>
    <property type="molecule type" value="Genomic_DNA"/>
</dbReference>
<dbReference type="EMBL" id="AP008209">
    <property type="protein sequence ID" value="BAF12281.1"/>
    <property type="molecule type" value="Genomic_DNA"/>
</dbReference>
<dbReference type="EMBL" id="AP014959">
    <property type="protein sequence ID" value="BAS84704.1"/>
    <property type="molecule type" value="Genomic_DNA"/>
</dbReference>
<dbReference type="EMBL" id="CM000140">
    <property type="protein sequence ID" value="EEE59257.1"/>
    <property type="molecule type" value="Genomic_DNA"/>
</dbReference>
<dbReference type="EMBL" id="AK103650">
    <property type="protein sequence ID" value="BAG96187.1"/>
    <property type="molecule type" value="mRNA"/>
</dbReference>
<dbReference type="RefSeq" id="XP_015633141.1">
    <property type="nucleotide sequence ID" value="XM_015777655.1"/>
</dbReference>
<dbReference type="FunCoup" id="Q75IW1">
    <property type="interactions" value="11"/>
</dbReference>
<dbReference type="GlyCosmos" id="Q75IW1">
    <property type="glycosylation" value="8 sites, No reported glycans"/>
</dbReference>
<dbReference type="PaxDb" id="39947-Q75IW1"/>
<dbReference type="EnsemblPlants" id="Os03t0416300-01">
    <property type="protein sequence ID" value="Os03t0416300-01"/>
    <property type="gene ID" value="Os03g0416300"/>
</dbReference>
<dbReference type="Gramene" id="Os03t0416300-01">
    <property type="protein sequence ID" value="Os03t0416300-01"/>
    <property type="gene ID" value="Os03g0416300"/>
</dbReference>
<dbReference type="KEGG" id="dosa:Os03g0416300"/>
<dbReference type="eggNOG" id="ENOG502QTGW">
    <property type="taxonomic scope" value="Eukaryota"/>
</dbReference>
<dbReference type="HOGENOM" id="CLU_038120_0_0_1"/>
<dbReference type="InParanoid" id="Q75IW1"/>
<dbReference type="OMA" id="YSNDSAM"/>
<dbReference type="OrthoDB" id="2012261at2759"/>
<dbReference type="Proteomes" id="UP000000763">
    <property type="component" value="Chromosome 3"/>
</dbReference>
<dbReference type="Proteomes" id="UP000007752">
    <property type="component" value="Chromosome 3"/>
</dbReference>
<dbReference type="Proteomes" id="UP000059680">
    <property type="component" value="Chromosome 3"/>
</dbReference>
<dbReference type="ExpressionAtlas" id="Q75IW1">
    <property type="expression patterns" value="baseline and differential"/>
</dbReference>
<dbReference type="GO" id="GO:0005886">
    <property type="term" value="C:plasma membrane"/>
    <property type="evidence" value="ECO:0000318"/>
    <property type="project" value="GO_Central"/>
</dbReference>
<dbReference type="GO" id="GO:0010215">
    <property type="term" value="P:cellulose microfibril organization"/>
    <property type="evidence" value="ECO:0007669"/>
    <property type="project" value="InterPro"/>
</dbReference>
<dbReference type="GO" id="GO:0052324">
    <property type="term" value="P:plant-type cell wall cellulose biosynthetic process"/>
    <property type="evidence" value="ECO:0000318"/>
    <property type="project" value="GO_Central"/>
</dbReference>
<dbReference type="InterPro" id="IPR056900">
    <property type="entry name" value="COB_C"/>
</dbReference>
<dbReference type="InterPro" id="IPR006918">
    <property type="entry name" value="COBRA_pln"/>
</dbReference>
<dbReference type="PANTHER" id="PTHR31673:SF43">
    <property type="entry name" value="COBRA-LIKE PROTEIN 2"/>
    <property type="match status" value="1"/>
</dbReference>
<dbReference type="PANTHER" id="PTHR31673">
    <property type="entry name" value="PROTEIN COBRA"/>
    <property type="match status" value="1"/>
</dbReference>
<dbReference type="Pfam" id="PF25079">
    <property type="entry name" value="COB_C"/>
    <property type="match status" value="1"/>
</dbReference>
<dbReference type="Pfam" id="PF04833">
    <property type="entry name" value="COBRA"/>
    <property type="match status" value="1"/>
</dbReference>
<dbReference type="PIRSF" id="PIRSF038122">
    <property type="entry name" value="COBRA"/>
    <property type="match status" value="1"/>
</dbReference>
<protein>
    <recommendedName>
        <fullName>COBRA-like protein 2</fullName>
    </recommendedName>
    <alternativeName>
        <fullName>Protein BRITTLE CULM1-like 2</fullName>
    </alternativeName>
</protein>